<gene>
    <name evidence="1" type="primary">hldE</name>
    <name type="ordered locus">HPAG1_0841</name>
</gene>
<protein>
    <recommendedName>
        <fullName evidence="1">Bifunctional protein HldE</fullName>
    </recommendedName>
    <domain>
        <recommendedName>
            <fullName evidence="1">D-beta-D-heptose 7-phosphate kinase</fullName>
            <ecNumber evidence="1">2.7.1.167</ecNumber>
        </recommendedName>
        <alternativeName>
            <fullName evidence="1">D-beta-D-heptose 7-phosphotransferase</fullName>
        </alternativeName>
        <alternativeName>
            <fullName evidence="1">D-glycero-beta-D-manno-heptose-7-phosphate kinase</fullName>
        </alternativeName>
    </domain>
    <domain>
        <recommendedName>
            <fullName evidence="1">D-beta-D-heptose 1-phosphate adenylyltransferase</fullName>
            <ecNumber evidence="1">2.7.7.70</ecNumber>
        </recommendedName>
        <alternativeName>
            <fullName evidence="1">D-glycero-beta-D-manno-heptose 1-phosphate adenylyltransferase</fullName>
        </alternativeName>
    </domain>
</protein>
<keyword id="KW-0067">ATP-binding</keyword>
<keyword id="KW-0119">Carbohydrate metabolism</keyword>
<keyword id="KW-0418">Kinase</keyword>
<keyword id="KW-0511">Multifunctional enzyme</keyword>
<keyword id="KW-0547">Nucleotide-binding</keyword>
<keyword id="KW-0548">Nucleotidyltransferase</keyword>
<keyword id="KW-0808">Transferase</keyword>
<evidence type="ECO:0000255" key="1">
    <source>
        <dbReference type="HAMAP-Rule" id="MF_01603"/>
    </source>
</evidence>
<feature type="chain" id="PRO_0000255763" description="Bifunctional protein HldE">
    <location>
        <begin position="1"/>
        <end position="463"/>
    </location>
</feature>
<feature type="region of interest" description="Ribokinase">
    <location>
        <begin position="1"/>
        <end position="315"/>
    </location>
</feature>
<feature type="region of interest" description="Cytidylyltransferase">
    <location>
        <begin position="334"/>
        <end position="463"/>
    </location>
</feature>
<feature type="active site" evidence="1">
    <location>
        <position position="260"/>
    </location>
</feature>
<feature type="binding site" evidence="1">
    <location>
        <begin position="191"/>
        <end position="194"/>
    </location>
    <ligand>
        <name>ATP</name>
        <dbReference type="ChEBI" id="CHEBI:30616"/>
    </ligand>
</feature>
<reference key="1">
    <citation type="journal article" date="2006" name="Proc. Natl. Acad. Sci. U.S.A.">
        <title>The complete genome sequence of a chronic atrophic gastritis Helicobacter pylori strain: evolution during disease progression.</title>
        <authorList>
            <person name="Oh J.D."/>
            <person name="Kling-Baeckhed H."/>
            <person name="Giannakis M."/>
            <person name="Xu J."/>
            <person name="Fulton R.S."/>
            <person name="Fulton L.A."/>
            <person name="Cordum H.S."/>
            <person name="Wang C."/>
            <person name="Elliott G."/>
            <person name="Edwards J."/>
            <person name="Mardis E.R."/>
            <person name="Engstrand L.G."/>
            <person name="Gordon J.I."/>
        </authorList>
    </citation>
    <scope>NUCLEOTIDE SEQUENCE [LARGE SCALE GENOMIC DNA]</scope>
    <source>
        <strain>HPAG1</strain>
    </source>
</reference>
<comment type="function">
    <text evidence="1">Catalyzes the phosphorylation of D-glycero-D-manno-heptose 7-phosphate at the C-1 position to selectively form D-glycero-beta-D-manno-heptose-1,7-bisphosphate.</text>
</comment>
<comment type="function">
    <text evidence="1">Catalyzes the ADP transfer from ATP to D-glycero-beta-D-manno-heptose 1-phosphate, yielding ADP-D-glycero-beta-D-manno-heptose.</text>
</comment>
<comment type="catalytic activity">
    <reaction evidence="1">
        <text>D-glycero-beta-D-manno-heptose 7-phosphate + ATP = D-glycero-beta-D-manno-heptose 1,7-bisphosphate + ADP + H(+)</text>
        <dbReference type="Rhea" id="RHEA:27473"/>
        <dbReference type="ChEBI" id="CHEBI:15378"/>
        <dbReference type="ChEBI" id="CHEBI:30616"/>
        <dbReference type="ChEBI" id="CHEBI:60204"/>
        <dbReference type="ChEBI" id="CHEBI:60208"/>
        <dbReference type="ChEBI" id="CHEBI:456216"/>
        <dbReference type="EC" id="2.7.1.167"/>
    </reaction>
</comment>
<comment type="catalytic activity">
    <reaction evidence="1">
        <text>D-glycero-beta-D-manno-heptose 1-phosphate + ATP + H(+) = ADP-D-glycero-beta-D-manno-heptose + diphosphate</text>
        <dbReference type="Rhea" id="RHEA:27465"/>
        <dbReference type="ChEBI" id="CHEBI:15378"/>
        <dbReference type="ChEBI" id="CHEBI:30616"/>
        <dbReference type="ChEBI" id="CHEBI:33019"/>
        <dbReference type="ChEBI" id="CHEBI:59967"/>
        <dbReference type="ChEBI" id="CHEBI:61593"/>
        <dbReference type="EC" id="2.7.7.70"/>
    </reaction>
</comment>
<comment type="pathway">
    <text evidence="1">Nucleotide-sugar biosynthesis; ADP-L-glycero-beta-D-manno-heptose biosynthesis; ADP-L-glycero-beta-D-manno-heptose from D-glycero-beta-D-manno-heptose 7-phosphate: step 1/4.</text>
</comment>
<comment type="pathway">
    <text evidence="1">Nucleotide-sugar biosynthesis; ADP-L-glycero-beta-D-manno-heptose biosynthesis; ADP-L-glycero-beta-D-manno-heptose from D-glycero-beta-D-manno-heptose 7-phosphate: step 3/4.</text>
</comment>
<comment type="subunit">
    <text evidence="1">Homodimer.</text>
</comment>
<comment type="similarity">
    <text evidence="1">In the N-terminal section; belongs to the carbohydrate kinase PfkB family.</text>
</comment>
<comment type="similarity">
    <text evidence="1">In the C-terminal section; belongs to the cytidylyltransferase family.</text>
</comment>
<name>HLDE_HELPH</name>
<dbReference type="EC" id="2.7.1.167" evidence="1"/>
<dbReference type="EC" id="2.7.7.70" evidence="1"/>
<dbReference type="EMBL" id="CP000241">
    <property type="protein sequence ID" value="ABF84908.1"/>
    <property type="molecule type" value="Genomic_DNA"/>
</dbReference>
<dbReference type="RefSeq" id="WP_000722994.1">
    <property type="nucleotide sequence ID" value="NC_008086.1"/>
</dbReference>
<dbReference type="SMR" id="Q1CT14"/>
<dbReference type="KEGG" id="hpa:HPAG1_0841"/>
<dbReference type="HOGENOM" id="CLU_021150_2_1_7"/>
<dbReference type="UniPathway" id="UPA00356">
    <property type="reaction ID" value="UER00437"/>
</dbReference>
<dbReference type="UniPathway" id="UPA00356">
    <property type="reaction ID" value="UER00439"/>
</dbReference>
<dbReference type="GO" id="GO:0005829">
    <property type="term" value="C:cytosol"/>
    <property type="evidence" value="ECO:0007669"/>
    <property type="project" value="TreeGrafter"/>
</dbReference>
<dbReference type="GO" id="GO:0005524">
    <property type="term" value="F:ATP binding"/>
    <property type="evidence" value="ECO:0007669"/>
    <property type="project" value="UniProtKB-UniRule"/>
</dbReference>
<dbReference type="GO" id="GO:0033785">
    <property type="term" value="F:heptose 7-phosphate kinase activity"/>
    <property type="evidence" value="ECO:0007669"/>
    <property type="project" value="UniProtKB-UniRule"/>
</dbReference>
<dbReference type="GO" id="GO:0033786">
    <property type="term" value="F:heptose-1-phosphate adenylyltransferase activity"/>
    <property type="evidence" value="ECO:0007669"/>
    <property type="project" value="UniProtKB-UniRule"/>
</dbReference>
<dbReference type="GO" id="GO:0016773">
    <property type="term" value="F:phosphotransferase activity, alcohol group as acceptor"/>
    <property type="evidence" value="ECO:0007669"/>
    <property type="project" value="InterPro"/>
</dbReference>
<dbReference type="GO" id="GO:0097171">
    <property type="term" value="P:ADP-L-glycero-beta-D-manno-heptose biosynthetic process"/>
    <property type="evidence" value="ECO:0007669"/>
    <property type="project" value="UniProtKB-UniPathway"/>
</dbReference>
<dbReference type="CDD" id="cd01172">
    <property type="entry name" value="RfaE_like"/>
    <property type="match status" value="1"/>
</dbReference>
<dbReference type="Gene3D" id="3.40.1190.20">
    <property type="match status" value="1"/>
</dbReference>
<dbReference type="Gene3D" id="3.40.50.620">
    <property type="entry name" value="HUPs"/>
    <property type="match status" value="1"/>
</dbReference>
<dbReference type="HAMAP" id="MF_01603">
    <property type="entry name" value="HldE"/>
    <property type="match status" value="1"/>
</dbReference>
<dbReference type="InterPro" id="IPR023030">
    <property type="entry name" value="Bifunc_HldE"/>
</dbReference>
<dbReference type="InterPro" id="IPR004821">
    <property type="entry name" value="Cyt_trans-like"/>
</dbReference>
<dbReference type="InterPro" id="IPR011611">
    <property type="entry name" value="PfkB_dom"/>
</dbReference>
<dbReference type="InterPro" id="IPR011913">
    <property type="entry name" value="RfaE_dom_I"/>
</dbReference>
<dbReference type="InterPro" id="IPR011914">
    <property type="entry name" value="RfaE_dom_II"/>
</dbReference>
<dbReference type="InterPro" id="IPR029056">
    <property type="entry name" value="Ribokinase-like"/>
</dbReference>
<dbReference type="InterPro" id="IPR014729">
    <property type="entry name" value="Rossmann-like_a/b/a_fold"/>
</dbReference>
<dbReference type="NCBIfam" id="TIGR00125">
    <property type="entry name" value="cyt_tran_rel"/>
    <property type="match status" value="1"/>
</dbReference>
<dbReference type="NCBIfam" id="TIGR02198">
    <property type="entry name" value="rfaE_dom_I"/>
    <property type="match status" value="1"/>
</dbReference>
<dbReference type="NCBIfam" id="TIGR02199">
    <property type="entry name" value="rfaE_dom_II"/>
    <property type="match status" value="1"/>
</dbReference>
<dbReference type="PANTHER" id="PTHR46969">
    <property type="entry name" value="BIFUNCTIONAL PROTEIN HLDE"/>
    <property type="match status" value="1"/>
</dbReference>
<dbReference type="PANTHER" id="PTHR46969:SF1">
    <property type="entry name" value="BIFUNCTIONAL PROTEIN HLDE"/>
    <property type="match status" value="1"/>
</dbReference>
<dbReference type="Pfam" id="PF01467">
    <property type="entry name" value="CTP_transf_like"/>
    <property type="match status" value="1"/>
</dbReference>
<dbReference type="Pfam" id="PF00294">
    <property type="entry name" value="PfkB"/>
    <property type="match status" value="1"/>
</dbReference>
<dbReference type="SUPFAM" id="SSF52374">
    <property type="entry name" value="Nucleotidylyl transferase"/>
    <property type="match status" value="1"/>
</dbReference>
<dbReference type="SUPFAM" id="SSF53613">
    <property type="entry name" value="Ribokinase-like"/>
    <property type="match status" value="1"/>
</dbReference>
<sequence length="463" mass="51142">MKKILVIGDLIADYYLWGKSERLSPEAPVPVLEVKKESKNLGGAANVANNLISLKAKVFLCGVVGDDLEGKHFISALKAREIDTSGILTDKTRCTTLKTRIIAQNQQIVRVDKEIKDPLNADLRKKLLDFFTEKIQEIDGVILSDYNKGVLDFELTQKMITLANQHHKLILCDPKGKDYSKYSHASLITPNRAELEHALHLKLDSHANLSKALQILKETYQIAMPLVTLSEQGIAFLEKGELVNCPTIAKEVYDVTGAGDTVIASLTLSLLESMSLKDACEFANAAAAVVVGKMGSALASLEEIALILNQTHPKILPLEKLLETLEHHQQKIVFTNGCFDLLHKGHASYLQKAKALGDILVVGLNSDNSIKRLKGNKRPIVSEKDRAFLLASLSCVDYVVVFEEDAPIKLIQALKPDILVKGADYLNKEVIGSEFAKETHLMEFEEGYSTSAIIEKIKRTHND</sequence>
<organism>
    <name type="scientific">Helicobacter pylori (strain HPAG1)</name>
    <dbReference type="NCBI Taxonomy" id="357544"/>
    <lineage>
        <taxon>Bacteria</taxon>
        <taxon>Pseudomonadati</taxon>
        <taxon>Campylobacterota</taxon>
        <taxon>Epsilonproteobacteria</taxon>
        <taxon>Campylobacterales</taxon>
        <taxon>Helicobacteraceae</taxon>
        <taxon>Helicobacter</taxon>
    </lineage>
</organism>
<accession>Q1CT14</accession>
<proteinExistence type="inferred from homology"/>